<sequence>MIEEKKELKKRRVLQMARFYGAAAFTLITMRLISRAIKVRKYVPSIFQQNYKLPPFSQRNEAMSALTYASAASIGTFSTLIFGFCWALDISTAREFVFKTREFMSLPQALETDTSMDEETSKLTKQLQDLLSSENNK</sequence>
<reference key="1">
    <citation type="journal article" date="1997" name="Nature">
        <title>The nucleotide sequence of Saccharomyces cerevisiae chromosome V.</title>
        <authorList>
            <person name="Dietrich F.S."/>
            <person name="Mulligan J.T."/>
            <person name="Hennessy K.M."/>
            <person name="Yelton M.A."/>
            <person name="Allen E."/>
            <person name="Araujo R."/>
            <person name="Aviles E."/>
            <person name="Berno A."/>
            <person name="Brennan T."/>
            <person name="Carpenter J."/>
            <person name="Chen E."/>
            <person name="Cherry J.M."/>
            <person name="Chung E."/>
            <person name="Duncan M."/>
            <person name="Guzman E."/>
            <person name="Hartzell G."/>
            <person name="Hunicke-Smith S."/>
            <person name="Hyman R.W."/>
            <person name="Kayser A."/>
            <person name="Komp C."/>
            <person name="Lashkari D."/>
            <person name="Lew H."/>
            <person name="Lin D."/>
            <person name="Mosedale D."/>
            <person name="Nakahara K."/>
            <person name="Namath A."/>
            <person name="Norgren R."/>
            <person name="Oefner P."/>
            <person name="Oh C."/>
            <person name="Petel F.X."/>
            <person name="Roberts D."/>
            <person name="Sehl P."/>
            <person name="Schramm S."/>
            <person name="Shogren T."/>
            <person name="Smith V."/>
            <person name="Taylor P."/>
            <person name="Wei Y."/>
            <person name="Botstein D."/>
            <person name="Davis R.W."/>
        </authorList>
    </citation>
    <scope>NUCLEOTIDE SEQUENCE [LARGE SCALE GENOMIC DNA]</scope>
    <source>
        <strain>ATCC 204508 / S288c</strain>
    </source>
</reference>
<reference key="2">
    <citation type="journal article" date="2014" name="G3 (Bethesda)">
        <title>The reference genome sequence of Saccharomyces cerevisiae: Then and now.</title>
        <authorList>
            <person name="Engel S.R."/>
            <person name="Dietrich F.S."/>
            <person name="Fisk D.G."/>
            <person name="Binkley G."/>
            <person name="Balakrishnan R."/>
            <person name="Costanzo M.C."/>
            <person name="Dwight S.S."/>
            <person name="Hitz B.C."/>
            <person name="Karra K."/>
            <person name="Nash R.S."/>
            <person name="Weng S."/>
            <person name="Wong E.D."/>
            <person name="Lloyd P."/>
            <person name="Skrzypek M.S."/>
            <person name="Miyasato S.R."/>
            <person name="Simison M."/>
            <person name="Cherry J.M."/>
        </authorList>
    </citation>
    <scope>GENOME REANNOTATION</scope>
    <source>
        <strain>ATCC 204508 / S288c</strain>
    </source>
</reference>
<reference key="3">
    <citation type="journal article" date="2003" name="Nature">
        <title>Global analysis of protein expression in yeast.</title>
        <authorList>
            <person name="Ghaemmaghami S."/>
            <person name="Huh W.-K."/>
            <person name="Bower K."/>
            <person name="Howson R.W."/>
            <person name="Belle A."/>
            <person name="Dephoure N."/>
            <person name="O'Shea E.K."/>
            <person name="Weissman J.S."/>
        </authorList>
    </citation>
    <scope>LEVEL OF PROTEIN EXPRESSION [LARGE SCALE ANALYSIS]</scope>
</reference>
<reference key="4">
    <citation type="journal article" date="2009" name="J. Cell Biol.">
        <title>The genetic interactome of prohibitins: coordinated control of cardiolipin and phosphatidylethanolamine by conserved regulators in mitochondria.</title>
        <authorList>
            <person name="Osman C."/>
            <person name="Haag M."/>
            <person name="Potting C."/>
            <person name="Rodenfels J."/>
            <person name="Dip P.V."/>
            <person name="Wieland F.T."/>
            <person name="Brugger B."/>
            <person name="Westermann B."/>
            <person name="Langer T."/>
        </authorList>
    </citation>
    <scope>DISRUPTION PHENOTYPE</scope>
</reference>
<reference key="5">
    <citation type="journal article" date="2009" name="PLoS Genet.">
        <title>Computationally driven, quantitative experiments discover genes required for mitochondrial biogenesis.</title>
        <authorList>
            <person name="Hess D.C."/>
            <person name="Myers C.L."/>
            <person name="Huttenhower C."/>
            <person name="Hibbs M.A."/>
            <person name="Hayes A.P."/>
            <person name="Paw J."/>
            <person name="Clore J.J."/>
            <person name="Mendoza R.M."/>
            <person name="Luis B.S."/>
            <person name="Nislow C."/>
            <person name="Giaever G."/>
            <person name="Costanzo M."/>
            <person name="Troyanskaya O.G."/>
            <person name="Caudy A.A."/>
        </authorList>
    </citation>
    <scope>DISRUPTION PHENOTYPE</scope>
</reference>
<feature type="chain" id="PRO_0000202641" description="Altered inheritance of mitochondria protein 11">
    <location>
        <begin position="1"/>
        <end position="137"/>
    </location>
</feature>
<feature type="transmembrane region" description="Helical" evidence="1">
    <location>
        <begin position="20"/>
        <end position="37"/>
    </location>
</feature>
<feature type="transmembrane region" description="Helical" evidence="1">
    <location>
        <begin position="66"/>
        <end position="88"/>
    </location>
</feature>
<name>AIM11_YEAST</name>
<dbReference type="EMBL" id="U18839">
    <property type="protein sequence ID" value="AAB64664.1"/>
    <property type="status" value="ALT_SEQ"/>
    <property type="molecule type" value="Genomic_DNA"/>
</dbReference>
<dbReference type="EMBL" id="BK006939">
    <property type="protein sequence ID" value="DAA07755.1"/>
    <property type="molecule type" value="Genomic_DNA"/>
</dbReference>
<dbReference type="PIR" id="S53547">
    <property type="entry name" value="S53547"/>
</dbReference>
<dbReference type="RefSeq" id="NP_011019.1">
    <property type="nucleotide sequence ID" value="NM_001180860.1"/>
</dbReference>
<dbReference type="SMR" id="P87275"/>
<dbReference type="BioGRID" id="36839">
    <property type="interactions" value="326"/>
</dbReference>
<dbReference type="FunCoup" id="P87275">
    <property type="interactions" value="40"/>
</dbReference>
<dbReference type="STRING" id="4932.YER093C-A"/>
<dbReference type="PaxDb" id="4932-YER093C-A"/>
<dbReference type="PeptideAtlas" id="P87275"/>
<dbReference type="EnsemblFungi" id="YER093C-A_mRNA">
    <property type="protein sequence ID" value="YER093C-A"/>
    <property type="gene ID" value="YER093C-A"/>
</dbReference>
<dbReference type="GeneID" id="856829"/>
<dbReference type="KEGG" id="sce:YER093C-A"/>
<dbReference type="AGR" id="SGD:S000002960"/>
<dbReference type="SGD" id="S000002960">
    <property type="gene designation" value="AIM11"/>
</dbReference>
<dbReference type="VEuPathDB" id="FungiDB:YER093C-A"/>
<dbReference type="eggNOG" id="ENOG502SAK0">
    <property type="taxonomic scope" value="Eukaryota"/>
</dbReference>
<dbReference type="GeneTree" id="ENSGT00940000176820"/>
<dbReference type="HOGENOM" id="CLU_118700_0_0_1"/>
<dbReference type="InParanoid" id="P87275"/>
<dbReference type="OMA" id="RFAYKST"/>
<dbReference type="OrthoDB" id="4088121at2759"/>
<dbReference type="BioCyc" id="YEAST:G3O-30355-MONOMER"/>
<dbReference type="BioGRID-ORCS" id="856829">
    <property type="hits" value="1 hit in 10 CRISPR screens"/>
</dbReference>
<dbReference type="PRO" id="PR:P87275"/>
<dbReference type="Proteomes" id="UP000002311">
    <property type="component" value="Chromosome V"/>
</dbReference>
<dbReference type="RNAct" id="P87275">
    <property type="molecule type" value="protein"/>
</dbReference>
<dbReference type="GO" id="GO:0016020">
    <property type="term" value="C:membrane"/>
    <property type="evidence" value="ECO:0007669"/>
    <property type="project" value="UniProtKB-SubCell"/>
</dbReference>
<dbReference type="GO" id="GO:0005739">
    <property type="term" value="C:mitochondrion"/>
    <property type="evidence" value="ECO:0007005"/>
    <property type="project" value="SGD"/>
</dbReference>
<dbReference type="GO" id="GO:0005777">
    <property type="term" value="C:peroxisome"/>
    <property type="evidence" value="ECO:0007005"/>
    <property type="project" value="SGD"/>
</dbReference>
<dbReference type="InterPro" id="IPR038814">
    <property type="entry name" value="AIM11"/>
</dbReference>
<dbReference type="PANTHER" id="PTHR39136">
    <property type="entry name" value="ALTERED INHERITANCE OF MITOCHONDRIA PROTEIN 11"/>
    <property type="match status" value="1"/>
</dbReference>
<dbReference type="PANTHER" id="PTHR39136:SF1">
    <property type="entry name" value="ALTERED INHERITANCE OF MITOCHONDRIA PROTEIN 11"/>
    <property type="match status" value="1"/>
</dbReference>
<proteinExistence type="evidence at protein level"/>
<keyword id="KW-0472">Membrane</keyword>
<keyword id="KW-1185">Reference proteome</keyword>
<keyword id="KW-0812">Transmembrane</keyword>
<keyword id="KW-1133">Transmembrane helix</keyword>
<gene>
    <name type="primary">AIM11</name>
    <name type="synonym">GEP8</name>
    <name type="ordered locus">YER093C-A</name>
</gene>
<accession>P87275</accession>
<accession>D3DM01</accession>
<protein>
    <recommendedName>
        <fullName>Altered inheritance of mitochondria protein 11</fullName>
    </recommendedName>
    <alternativeName>
        <fullName>Genetic interactor of prohibitins 8</fullName>
    </alternativeName>
</protein>
<evidence type="ECO:0000255" key="1"/>
<evidence type="ECO:0000269" key="2">
    <source>
    </source>
</evidence>
<evidence type="ECO:0000269" key="3">
    <source>
    </source>
</evidence>
<evidence type="ECO:0000269" key="4">
    <source>
    </source>
</evidence>
<evidence type="ECO:0000305" key="5"/>
<comment type="subcellular location">
    <subcellularLocation>
        <location evidence="5">Membrane</location>
        <topology evidence="5">Multi-pass membrane protein</topology>
    </subcellularLocation>
</comment>
<comment type="disruption phenotype">
    <text evidence="3 4">Increases frequency of mitochondrial genome loss and leads to synthetic letality with a prohibitin complex subunit PHB1 deletant.</text>
</comment>
<comment type="miscellaneous">
    <text evidence="2">Present with 1835 molecules/cell in log phase SD medium.</text>
</comment>
<comment type="similarity">
    <text evidence="5">Belongs to the AIM11 family.</text>
</comment>
<comment type="sequence caution" evidence="5">
    <conflict type="erroneous gene model prediction">
        <sequence resource="EMBL-CDS" id="AAB64664"/>
    </conflict>
</comment>
<organism>
    <name type="scientific">Saccharomyces cerevisiae (strain ATCC 204508 / S288c)</name>
    <name type="common">Baker's yeast</name>
    <dbReference type="NCBI Taxonomy" id="559292"/>
    <lineage>
        <taxon>Eukaryota</taxon>
        <taxon>Fungi</taxon>
        <taxon>Dikarya</taxon>
        <taxon>Ascomycota</taxon>
        <taxon>Saccharomycotina</taxon>
        <taxon>Saccharomycetes</taxon>
        <taxon>Saccharomycetales</taxon>
        <taxon>Saccharomycetaceae</taxon>
        <taxon>Saccharomyces</taxon>
    </lineage>
</organism>